<sequence>MATELTWHDVLADEKQQPYFINTLHTVAGERQSGITVYPPQKDVFNAFRFTELGDVKVVILGQDPYHGPGQAHGLAFSVRPGIAPPPSLVNMYKELEASIPGFVRPAHGYLESWARQGVLLLNTVLTVRAGQAHSHASLGWETFTDKVISLINQHREGVVFLLWGSHAQKKGAIIDPQRHHILKAPHPSPLSAHRGFFGCNHFALTNQWLEQHGEKTIDWTPVLPAESE</sequence>
<name>UNG_SALPA</name>
<organism>
    <name type="scientific">Salmonella paratyphi A (strain ATCC 9150 / SARB42)</name>
    <dbReference type="NCBI Taxonomy" id="295319"/>
    <lineage>
        <taxon>Bacteria</taxon>
        <taxon>Pseudomonadati</taxon>
        <taxon>Pseudomonadota</taxon>
        <taxon>Gammaproteobacteria</taxon>
        <taxon>Enterobacterales</taxon>
        <taxon>Enterobacteriaceae</taxon>
        <taxon>Salmonella</taxon>
    </lineage>
</organism>
<dbReference type="EC" id="3.2.2.27" evidence="1"/>
<dbReference type="EMBL" id="CP000026">
    <property type="protein sequence ID" value="AAV76293.1"/>
    <property type="molecule type" value="Genomic_DNA"/>
</dbReference>
<dbReference type="RefSeq" id="WP_000179978.1">
    <property type="nucleotide sequence ID" value="NC_006511.1"/>
</dbReference>
<dbReference type="SMR" id="Q5PLH8"/>
<dbReference type="KEGG" id="spt:SPA0271"/>
<dbReference type="HOGENOM" id="CLU_032162_3_0_6"/>
<dbReference type="Proteomes" id="UP000008185">
    <property type="component" value="Chromosome"/>
</dbReference>
<dbReference type="GO" id="GO:0005737">
    <property type="term" value="C:cytoplasm"/>
    <property type="evidence" value="ECO:0007669"/>
    <property type="project" value="UniProtKB-SubCell"/>
</dbReference>
<dbReference type="GO" id="GO:0004844">
    <property type="term" value="F:uracil DNA N-glycosylase activity"/>
    <property type="evidence" value="ECO:0007669"/>
    <property type="project" value="UniProtKB-UniRule"/>
</dbReference>
<dbReference type="GO" id="GO:0097510">
    <property type="term" value="P:base-excision repair, AP site formation via deaminated base removal"/>
    <property type="evidence" value="ECO:0007669"/>
    <property type="project" value="TreeGrafter"/>
</dbReference>
<dbReference type="CDD" id="cd10027">
    <property type="entry name" value="UDG-F1-like"/>
    <property type="match status" value="1"/>
</dbReference>
<dbReference type="FunFam" id="3.40.470.10:FF:000001">
    <property type="entry name" value="Uracil-DNA glycosylase"/>
    <property type="match status" value="1"/>
</dbReference>
<dbReference type="Gene3D" id="3.40.470.10">
    <property type="entry name" value="Uracil-DNA glycosylase-like domain"/>
    <property type="match status" value="1"/>
</dbReference>
<dbReference type="HAMAP" id="MF_00148">
    <property type="entry name" value="UDG"/>
    <property type="match status" value="1"/>
</dbReference>
<dbReference type="InterPro" id="IPR002043">
    <property type="entry name" value="UDG_fam1"/>
</dbReference>
<dbReference type="InterPro" id="IPR018085">
    <property type="entry name" value="Ura-DNA_Glyclase_AS"/>
</dbReference>
<dbReference type="InterPro" id="IPR005122">
    <property type="entry name" value="Uracil-DNA_glycosylase-like"/>
</dbReference>
<dbReference type="InterPro" id="IPR036895">
    <property type="entry name" value="Uracil-DNA_glycosylase-like_sf"/>
</dbReference>
<dbReference type="NCBIfam" id="NF003588">
    <property type="entry name" value="PRK05254.1-1"/>
    <property type="match status" value="1"/>
</dbReference>
<dbReference type="NCBIfam" id="NF003589">
    <property type="entry name" value="PRK05254.1-2"/>
    <property type="match status" value="1"/>
</dbReference>
<dbReference type="NCBIfam" id="NF003591">
    <property type="entry name" value="PRK05254.1-4"/>
    <property type="match status" value="1"/>
</dbReference>
<dbReference type="NCBIfam" id="NF003592">
    <property type="entry name" value="PRK05254.1-5"/>
    <property type="match status" value="1"/>
</dbReference>
<dbReference type="NCBIfam" id="TIGR00628">
    <property type="entry name" value="ung"/>
    <property type="match status" value="1"/>
</dbReference>
<dbReference type="PANTHER" id="PTHR11264">
    <property type="entry name" value="URACIL-DNA GLYCOSYLASE"/>
    <property type="match status" value="1"/>
</dbReference>
<dbReference type="PANTHER" id="PTHR11264:SF0">
    <property type="entry name" value="URACIL-DNA GLYCOSYLASE"/>
    <property type="match status" value="1"/>
</dbReference>
<dbReference type="Pfam" id="PF03167">
    <property type="entry name" value="UDG"/>
    <property type="match status" value="1"/>
</dbReference>
<dbReference type="SMART" id="SM00986">
    <property type="entry name" value="UDG"/>
    <property type="match status" value="1"/>
</dbReference>
<dbReference type="SMART" id="SM00987">
    <property type="entry name" value="UreE_C"/>
    <property type="match status" value="1"/>
</dbReference>
<dbReference type="SUPFAM" id="SSF52141">
    <property type="entry name" value="Uracil-DNA glycosylase-like"/>
    <property type="match status" value="1"/>
</dbReference>
<dbReference type="PROSITE" id="PS00130">
    <property type="entry name" value="U_DNA_GLYCOSYLASE"/>
    <property type="match status" value="1"/>
</dbReference>
<protein>
    <recommendedName>
        <fullName evidence="1">Uracil-DNA glycosylase</fullName>
        <shortName evidence="1">UDG</shortName>
        <ecNumber evidence="1">3.2.2.27</ecNumber>
    </recommendedName>
</protein>
<comment type="function">
    <text evidence="1">Excises uracil residues from the DNA which can arise as a result of misincorporation of dUMP residues by DNA polymerase or due to deamination of cytosine.</text>
</comment>
<comment type="catalytic activity">
    <reaction evidence="1">
        <text>Hydrolyzes single-stranded DNA or mismatched double-stranded DNA and polynucleotides, releasing free uracil.</text>
        <dbReference type="EC" id="3.2.2.27"/>
    </reaction>
</comment>
<comment type="subcellular location">
    <subcellularLocation>
        <location evidence="1">Cytoplasm</location>
    </subcellularLocation>
</comment>
<comment type="similarity">
    <text evidence="1">Belongs to the uracil-DNA glycosylase (UDG) superfamily. UNG family.</text>
</comment>
<feature type="chain" id="PRO_1000009936" description="Uracil-DNA glycosylase">
    <location>
        <begin position="1"/>
        <end position="229"/>
    </location>
</feature>
<feature type="active site" description="Proton acceptor" evidence="1">
    <location>
        <position position="64"/>
    </location>
</feature>
<reference key="1">
    <citation type="journal article" date="2004" name="Nat. Genet.">
        <title>Comparison of genome degradation in Paratyphi A and Typhi, human-restricted serovars of Salmonella enterica that cause typhoid.</title>
        <authorList>
            <person name="McClelland M."/>
            <person name="Sanderson K.E."/>
            <person name="Clifton S.W."/>
            <person name="Latreille P."/>
            <person name="Porwollik S."/>
            <person name="Sabo A."/>
            <person name="Meyer R."/>
            <person name="Bieri T."/>
            <person name="Ozersky P."/>
            <person name="McLellan M."/>
            <person name="Harkins C.R."/>
            <person name="Wang C."/>
            <person name="Nguyen C."/>
            <person name="Berghoff A."/>
            <person name="Elliott G."/>
            <person name="Kohlberg S."/>
            <person name="Strong C."/>
            <person name="Du F."/>
            <person name="Carter J."/>
            <person name="Kremizki C."/>
            <person name="Layman D."/>
            <person name="Leonard S."/>
            <person name="Sun H."/>
            <person name="Fulton L."/>
            <person name="Nash W."/>
            <person name="Miner T."/>
            <person name="Minx P."/>
            <person name="Delehaunty K."/>
            <person name="Fronick C."/>
            <person name="Magrini V."/>
            <person name="Nhan M."/>
            <person name="Warren W."/>
            <person name="Florea L."/>
            <person name="Spieth J."/>
            <person name="Wilson R.K."/>
        </authorList>
    </citation>
    <scope>NUCLEOTIDE SEQUENCE [LARGE SCALE GENOMIC DNA]</scope>
    <source>
        <strain>ATCC 9150 / SARB42</strain>
    </source>
</reference>
<gene>
    <name evidence="1" type="primary">ung</name>
    <name type="ordered locus">SPA0271</name>
</gene>
<accession>Q5PLH8</accession>
<keyword id="KW-0963">Cytoplasm</keyword>
<keyword id="KW-0227">DNA damage</keyword>
<keyword id="KW-0234">DNA repair</keyword>
<keyword id="KW-0378">Hydrolase</keyword>
<evidence type="ECO:0000255" key="1">
    <source>
        <dbReference type="HAMAP-Rule" id="MF_00148"/>
    </source>
</evidence>
<proteinExistence type="inferred from homology"/>